<comment type="function">
    <text evidence="1">IF-3 binds to the 30S ribosomal subunit and shifts the equilibrium between 70S ribosomes and their 50S and 30S subunits in favor of the free subunits, thus enhancing the availability of 30S subunits on which protein synthesis initiation begins.</text>
</comment>
<comment type="subunit">
    <text evidence="1">Monomer.</text>
</comment>
<comment type="subcellular location">
    <subcellularLocation>
        <location evidence="1">Cytoplasm</location>
    </subcellularLocation>
</comment>
<comment type="similarity">
    <text evidence="1">Belongs to the IF-3 family.</text>
</comment>
<reference key="1">
    <citation type="journal article" date="2007" name="PLoS Genet.">
        <title>Meningococcal genetic variation mechanisms viewed through comparative analysis of serogroup C strain FAM18.</title>
        <authorList>
            <person name="Bentley S.D."/>
            <person name="Vernikos G.S."/>
            <person name="Snyder L.A.S."/>
            <person name="Churcher C."/>
            <person name="Arrowsmith C."/>
            <person name="Chillingworth T."/>
            <person name="Cronin A."/>
            <person name="Davis P.H."/>
            <person name="Holroyd N.E."/>
            <person name="Jagels K."/>
            <person name="Maddison M."/>
            <person name="Moule S."/>
            <person name="Rabbinowitsch E."/>
            <person name="Sharp S."/>
            <person name="Unwin L."/>
            <person name="Whitehead S."/>
            <person name="Quail M.A."/>
            <person name="Achtman M."/>
            <person name="Barrell B.G."/>
            <person name="Saunders N.J."/>
            <person name="Parkhill J."/>
        </authorList>
    </citation>
    <scope>NUCLEOTIDE SEQUENCE [LARGE SCALE GENOMIC DNA]</scope>
    <source>
        <strain>ATCC 700532 / DSM 15464 / FAM18</strain>
    </source>
</reference>
<keyword id="KW-0963">Cytoplasm</keyword>
<keyword id="KW-0396">Initiation factor</keyword>
<keyword id="KW-0648">Protein biosynthesis</keyword>
<gene>
    <name evidence="1" type="primary">infC</name>
    <name type="ordered locus">NMC0673</name>
</gene>
<name>IF3_NEIMF</name>
<proteinExistence type="inferred from homology"/>
<organism>
    <name type="scientific">Neisseria meningitidis serogroup C / serotype 2a (strain ATCC 700532 / DSM 15464 / FAM18)</name>
    <dbReference type="NCBI Taxonomy" id="272831"/>
    <lineage>
        <taxon>Bacteria</taxon>
        <taxon>Pseudomonadati</taxon>
        <taxon>Pseudomonadota</taxon>
        <taxon>Betaproteobacteria</taxon>
        <taxon>Neisseriales</taxon>
        <taxon>Neisseriaceae</taxon>
        <taxon>Neisseria</taxon>
    </lineage>
</organism>
<feature type="chain" id="PRO_1000004547" description="Translation initiation factor IF-3">
    <location>
        <begin position="1"/>
        <end position="173"/>
    </location>
</feature>
<evidence type="ECO:0000255" key="1">
    <source>
        <dbReference type="HAMAP-Rule" id="MF_00080"/>
    </source>
</evidence>
<protein>
    <recommendedName>
        <fullName evidence="1">Translation initiation factor IF-3</fullName>
    </recommendedName>
</protein>
<dbReference type="EMBL" id="AM421808">
    <property type="protein sequence ID" value="CAM09964.1"/>
    <property type="molecule type" value="Genomic_DNA"/>
</dbReference>
<dbReference type="RefSeq" id="WP_010951024.1">
    <property type="nucleotide sequence ID" value="NC_008767.1"/>
</dbReference>
<dbReference type="SMR" id="A1KSY3"/>
<dbReference type="GeneID" id="93386453"/>
<dbReference type="KEGG" id="nmc:NMC0673"/>
<dbReference type="HOGENOM" id="CLU_054919_3_2_4"/>
<dbReference type="Proteomes" id="UP000002286">
    <property type="component" value="Chromosome"/>
</dbReference>
<dbReference type="GO" id="GO:0005829">
    <property type="term" value="C:cytosol"/>
    <property type="evidence" value="ECO:0007669"/>
    <property type="project" value="TreeGrafter"/>
</dbReference>
<dbReference type="GO" id="GO:0016020">
    <property type="term" value="C:membrane"/>
    <property type="evidence" value="ECO:0007669"/>
    <property type="project" value="TreeGrafter"/>
</dbReference>
<dbReference type="GO" id="GO:0043022">
    <property type="term" value="F:ribosome binding"/>
    <property type="evidence" value="ECO:0007669"/>
    <property type="project" value="TreeGrafter"/>
</dbReference>
<dbReference type="GO" id="GO:0003743">
    <property type="term" value="F:translation initiation factor activity"/>
    <property type="evidence" value="ECO:0007669"/>
    <property type="project" value="UniProtKB-UniRule"/>
</dbReference>
<dbReference type="GO" id="GO:0032790">
    <property type="term" value="P:ribosome disassembly"/>
    <property type="evidence" value="ECO:0007669"/>
    <property type="project" value="TreeGrafter"/>
</dbReference>
<dbReference type="FunFam" id="3.10.20.80:FF:000001">
    <property type="entry name" value="Translation initiation factor IF-3"/>
    <property type="match status" value="1"/>
</dbReference>
<dbReference type="FunFam" id="3.30.110.10:FF:000001">
    <property type="entry name" value="Translation initiation factor IF-3"/>
    <property type="match status" value="1"/>
</dbReference>
<dbReference type="Gene3D" id="3.30.110.10">
    <property type="entry name" value="Translation initiation factor 3 (IF-3), C-terminal domain"/>
    <property type="match status" value="1"/>
</dbReference>
<dbReference type="Gene3D" id="3.10.20.80">
    <property type="entry name" value="Translation initiation factor 3 (IF-3), N-terminal domain"/>
    <property type="match status" value="1"/>
</dbReference>
<dbReference type="HAMAP" id="MF_00080">
    <property type="entry name" value="IF_3"/>
    <property type="match status" value="1"/>
</dbReference>
<dbReference type="InterPro" id="IPR036788">
    <property type="entry name" value="T_IF-3_C_sf"/>
</dbReference>
<dbReference type="InterPro" id="IPR036787">
    <property type="entry name" value="T_IF-3_N_sf"/>
</dbReference>
<dbReference type="InterPro" id="IPR019813">
    <property type="entry name" value="Translation_initiation_fac3_CS"/>
</dbReference>
<dbReference type="InterPro" id="IPR001288">
    <property type="entry name" value="Translation_initiation_fac_3"/>
</dbReference>
<dbReference type="InterPro" id="IPR019815">
    <property type="entry name" value="Translation_initiation_fac_3_C"/>
</dbReference>
<dbReference type="InterPro" id="IPR019814">
    <property type="entry name" value="Translation_initiation_fac_3_N"/>
</dbReference>
<dbReference type="NCBIfam" id="TIGR00168">
    <property type="entry name" value="infC"/>
    <property type="match status" value="1"/>
</dbReference>
<dbReference type="PANTHER" id="PTHR10938">
    <property type="entry name" value="TRANSLATION INITIATION FACTOR IF-3"/>
    <property type="match status" value="1"/>
</dbReference>
<dbReference type="PANTHER" id="PTHR10938:SF0">
    <property type="entry name" value="TRANSLATION INITIATION FACTOR IF-3, MITOCHONDRIAL"/>
    <property type="match status" value="1"/>
</dbReference>
<dbReference type="Pfam" id="PF00707">
    <property type="entry name" value="IF3_C"/>
    <property type="match status" value="1"/>
</dbReference>
<dbReference type="Pfam" id="PF05198">
    <property type="entry name" value="IF3_N"/>
    <property type="match status" value="1"/>
</dbReference>
<dbReference type="SUPFAM" id="SSF55200">
    <property type="entry name" value="Translation initiation factor IF3, C-terminal domain"/>
    <property type="match status" value="1"/>
</dbReference>
<dbReference type="SUPFAM" id="SSF54364">
    <property type="entry name" value="Translation initiation factor IF3, N-terminal domain"/>
    <property type="match status" value="1"/>
</dbReference>
<dbReference type="PROSITE" id="PS00938">
    <property type="entry name" value="IF3"/>
    <property type="match status" value="1"/>
</dbReference>
<accession>A1KSY3</accession>
<sequence length="173" mass="19779">MIAQEREARINGEITAKEVRLISESGEQLGVVSVREALAMAEGQDVDLVEISPTAKPPVCKLMDYGKYKYQQAKKRDEAKKNQKQVQIKEIKFRPGTDEGDYQIKMRNINRFLADGDKVKVTLRFRGREMAHQQLGAQLLERVKEDLAEVAQIESFPKMEGRQMVMMIAPKKK</sequence>